<reference key="1">
    <citation type="journal article" date="2005" name="J. Infect. Dis.">
        <title>Genome sequence of a serotype M28 strain of group A Streptococcus: potential new insights into puerperal sepsis and bacterial disease specificity.</title>
        <authorList>
            <person name="Green N.M."/>
            <person name="Zhang S."/>
            <person name="Porcella S.F."/>
            <person name="Nagiec M.J."/>
            <person name="Barbian K.D."/>
            <person name="Beres S.B."/>
            <person name="Lefebvre R.B."/>
            <person name="Musser J.M."/>
        </authorList>
    </citation>
    <scope>NUCLEOTIDE SEQUENCE [LARGE SCALE GENOMIC DNA]</scope>
    <source>
        <strain>MGAS6180</strain>
    </source>
</reference>
<gene>
    <name evidence="1" type="primary">rplR</name>
    <name type="ordered locus">M28_Spy0059</name>
</gene>
<name>RL18_STRPM</name>
<protein>
    <recommendedName>
        <fullName evidence="1">Large ribosomal subunit protein uL18</fullName>
    </recommendedName>
    <alternativeName>
        <fullName evidence="3">50S ribosomal protein L18</fullName>
    </alternativeName>
</protein>
<accession>Q48VT3</accession>
<comment type="function">
    <text evidence="1">This is one of the proteins that bind and probably mediate the attachment of the 5S RNA into the large ribosomal subunit, where it forms part of the central protuberance.</text>
</comment>
<comment type="subunit">
    <text evidence="1">Part of the 50S ribosomal subunit; part of the 5S rRNA/L5/L18/L25 subcomplex. Contacts the 5S and 23S rRNAs.</text>
</comment>
<comment type="similarity">
    <text evidence="1">Belongs to the universal ribosomal protein uL18 family.</text>
</comment>
<proteinExistence type="inferred from homology"/>
<keyword id="KW-0687">Ribonucleoprotein</keyword>
<keyword id="KW-0689">Ribosomal protein</keyword>
<keyword id="KW-0694">RNA-binding</keyword>
<keyword id="KW-0699">rRNA-binding</keyword>
<feature type="chain" id="PRO_0000251380" description="Large ribosomal subunit protein uL18">
    <location>
        <begin position="1"/>
        <end position="121"/>
    </location>
</feature>
<feature type="region of interest" description="Disordered" evidence="2">
    <location>
        <begin position="1"/>
        <end position="25"/>
    </location>
</feature>
<feature type="compositionally biased region" description="Basic residues" evidence="2">
    <location>
        <begin position="13"/>
        <end position="23"/>
    </location>
</feature>
<evidence type="ECO:0000255" key="1">
    <source>
        <dbReference type="HAMAP-Rule" id="MF_01337"/>
    </source>
</evidence>
<evidence type="ECO:0000256" key="2">
    <source>
        <dbReference type="SAM" id="MobiDB-lite"/>
    </source>
</evidence>
<evidence type="ECO:0000305" key="3"/>
<dbReference type="EMBL" id="CP000056">
    <property type="protein sequence ID" value="AAX71173.1"/>
    <property type="molecule type" value="Genomic_DNA"/>
</dbReference>
<dbReference type="SMR" id="Q48VT3"/>
<dbReference type="KEGG" id="spb:M28_Spy0059"/>
<dbReference type="HOGENOM" id="CLU_098841_0_1_9"/>
<dbReference type="GO" id="GO:0022625">
    <property type="term" value="C:cytosolic large ribosomal subunit"/>
    <property type="evidence" value="ECO:0007669"/>
    <property type="project" value="TreeGrafter"/>
</dbReference>
<dbReference type="GO" id="GO:0008097">
    <property type="term" value="F:5S rRNA binding"/>
    <property type="evidence" value="ECO:0007669"/>
    <property type="project" value="TreeGrafter"/>
</dbReference>
<dbReference type="GO" id="GO:0003735">
    <property type="term" value="F:structural constituent of ribosome"/>
    <property type="evidence" value="ECO:0007669"/>
    <property type="project" value="InterPro"/>
</dbReference>
<dbReference type="GO" id="GO:0006412">
    <property type="term" value="P:translation"/>
    <property type="evidence" value="ECO:0007669"/>
    <property type="project" value="UniProtKB-UniRule"/>
</dbReference>
<dbReference type="CDD" id="cd00432">
    <property type="entry name" value="Ribosomal_L18_L5e"/>
    <property type="match status" value="1"/>
</dbReference>
<dbReference type="FunFam" id="3.30.420.100:FF:000001">
    <property type="entry name" value="50S ribosomal protein L18"/>
    <property type="match status" value="1"/>
</dbReference>
<dbReference type="Gene3D" id="3.30.420.100">
    <property type="match status" value="1"/>
</dbReference>
<dbReference type="HAMAP" id="MF_01337_B">
    <property type="entry name" value="Ribosomal_uL18_B"/>
    <property type="match status" value="1"/>
</dbReference>
<dbReference type="InterPro" id="IPR004389">
    <property type="entry name" value="Ribosomal_uL18_bac-type"/>
</dbReference>
<dbReference type="InterPro" id="IPR005484">
    <property type="entry name" value="Ribosomal_uL18_bac/euk"/>
</dbReference>
<dbReference type="NCBIfam" id="TIGR00060">
    <property type="entry name" value="L18_bact"/>
    <property type="match status" value="1"/>
</dbReference>
<dbReference type="PANTHER" id="PTHR12899">
    <property type="entry name" value="39S RIBOSOMAL PROTEIN L18, MITOCHONDRIAL"/>
    <property type="match status" value="1"/>
</dbReference>
<dbReference type="PANTHER" id="PTHR12899:SF3">
    <property type="entry name" value="LARGE RIBOSOMAL SUBUNIT PROTEIN UL18M"/>
    <property type="match status" value="1"/>
</dbReference>
<dbReference type="Pfam" id="PF00861">
    <property type="entry name" value="Ribosomal_L18p"/>
    <property type="match status" value="1"/>
</dbReference>
<dbReference type="SUPFAM" id="SSF53137">
    <property type="entry name" value="Translational machinery components"/>
    <property type="match status" value="1"/>
</dbReference>
<sequence length="121" mass="13206">MKIVISKPDKNKIRQKRHRRVRGKLSGTADRPRLNVFRSNTGIYAQVIDDVAGVTLASASTLDKDVSKGTKTEQAVVVGKLVAERAVAKGISEVVFDRGGYLYHGRVKALADAARENGLKF</sequence>
<organism>
    <name type="scientific">Streptococcus pyogenes serotype M28 (strain MGAS6180)</name>
    <dbReference type="NCBI Taxonomy" id="319701"/>
    <lineage>
        <taxon>Bacteria</taxon>
        <taxon>Bacillati</taxon>
        <taxon>Bacillota</taxon>
        <taxon>Bacilli</taxon>
        <taxon>Lactobacillales</taxon>
        <taxon>Streptococcaceae</taxon>
        <taxon>Streptococcus</taxon>
    </lineage>
</organism>